<name>YODL_BACSU</name>
<organism>
    <name type="scientific">Bacillus subtilis (strain 168)</name>
    <dbReference type="NCBI Taxonomy" id="224308"/>
    <lineage>
        <taxon>Bacteria</taxon>
        <taxon>Bacillati</taxon>
        <taxon>Bacillota</taxon>
        <taxon>Bacilli</taxon>
        <taxon>Bacillales</taxon>
        <taxon>Bacillaceae</taxon>
        <taxon>Bacillus</taxon>
    </lineage>
</organism>
<accession>O30472</accession>
<accession>O34372</accession>
<evidence type="ECO:0000305" key="1"/>
<reference key="1">
    <citation type="journal article" date="1998" name="DNA Res.">
        <title>Sequence analysis of the Bacillus subtilis 168 chromosome region between the sspC and odhA loci (184 degrees-180 degrees).</title>
        <authorList>
            <person name="Ghim S.-Y."/>
            <person name="Choi S.-K."/>
            <person name="Shin B.-S."/>
            <person name="Jeong Y.-M."/>
            <person name="Sorokin A."/>
            <person name="Ehrlich S.D."/>
            <person name="Park S.-H."/>
        </authorList>
    </citation>
    <scope>NUCLEOTIDE SEQUENCE [GENOMIC DNA]</scope>
    <source>
        <strain>168</strain>
    </source>
</reference>
<reference key="2">
    <citation type="journal article" date="1997" name="Nature">
        <title>The complete genome sequence of the Gram-positive bacterium Bacillus subtilis.</title>
        <authorList>
            <person name="Kunst F."/>
            <person name="Ogasawara N."/>
            <person name="Moszer I."/>
            <person name="Albertini A.M."/>
            <person name="Alloni G."/>
            <person name="Azevedo V."/>
            <person name="Bertero M.G."/>
            <person name="Bessieres P."/>
            <person name="Bolotin A."/>
            <person name="Borchert S."/>
            <person name="Borriss R."/>
            <person name="Boursier L."/>
            <person name="Brans A."/>
            <person name="Braun M."/>
            <person name="Brignell S.C."/>
            <person name="Bron S."/>
            <person name="Brouillet S."/>
            <person name="Bruschi C.V."/>
            <person name="Caldwell B."/>
            <person name="Capuano V."/>
            <person name="Carter N.M."/>
            <person name="Choi S.-K."/>
            <person name="Codani J.-J."/>
            <person name="Connerton I.F."/>
            <person name="Cummings N.J."/>
            <person name="Daniel R.A."/>
            <person name="Denizot F."/>
            <person name="Devine K.M."/>
            <person name="Duesterhoeft A."/>
            <person name="Ehrlich S.D."/>
            <person name="Emmerson P.T."/>
            <person name="Entian K.-D."/>
            <person name="Errington J."/>
            <person name="Fabret C."/>
            <person name="Ferrari E."/>
            <person name="Foulger D."/>
            <person name="Fritz C."/>
            <person name="Fujita M."/>
            <person name="Fujita Y."/>
            <person name="Fuma S."/>
            <person name="Galizzi A."/>
            <person name="Galleron N."/>
            <person name="Ghim S.-Y."/>
            <person name="Glaser P."/>
            <person name="Goffeau A."/>
            <person name="Golightly E.J."/>
            <person name="Grandi G."/>
            <person name="Guiseppi G."/>
            <person name="Guy B.J."/>
            <person name="Haga K."/>
            <person name="Haiech J."/>
            <person name="Harwood C.R."/>
            <person name="Henaut A."/>
            <person name="Hilbert H."/>
            <person name="Holsappel S."/>
            <person name="Hosono S."/>
            <person name="Hullo M.-F."/>
            <person name="Itaya M."/>
            <person name="Jones L.-M."/>
            <person name="Joris B."/>
            <person name="Karamata D."/>
            <person name="Kasahara Y."/>
            <person name="Klaerr-Blanchard M."/>
            <person name="Klein C."/>
            <person name="Kobayashi Y."/>
            <person name="Koetter P."/>
            <person name="Koningstein G."/>
            <person name="Krogh S."/>
            <person name="Kumano M."/>
            <person name="Kurita K."/>
            <person name="Lapidus A."/>
            <person name="Lardinois S."/>
            <person name="Lauber J."/>
            <person name="Lazarevic V."/>
            <person name="Lee S.-M."/>
            <person name="Levine A."/>
            <person name="Liu H."/>
            <person name="Masuda S."/>
            <person name="Mauel C."/>
            <person name="Medigue C."/>
            <person name="Medina N."/>
            <person name="Mellado R.P."/>
            <person name="Mizuno M."/>
            <person name="Moestl D."/>
            <person name="Nakai S."/>
            <person name="Noback M."/>
            <person name="Noone D."/>
            <person name="O'Reilly M."/>
            <person name="Ogawa K."/>
            <person name="Ogiwara A."/>
            <person name="Oudega B."/>
            <person name="Park S.-H."/>
            <person name="Parro V."/>
            <person name="Pohl T.M."/>
            <person name="Portetelle D."/>
            <person name="Porwollik S."/>
            <person name="Prescott A.M."/>
            <person name="Presecan E."/>
            <person name="Pujic P."/>
            <person name="Purnelle B."/>
            <person name="Rapoport G."/>
            <person name="Rey M."/>
            <person name="Reynolds S."/>
            <person name="Rieger M."/>
            <person name="Rivolta C."/>
            <person name="Rocha E."/>
            <person name="Roche B."/>
            <person name="Rose M."/>
            <person name="Sadaie Y."/>
            <person name="Sato T."/>
            <person name="Scanlan E."/>
            <person name="Schleich S."/>
            <person name="Schroeter R."/>
            <person name="Scoffone F."/>
            <person name="Sekiguchi J."/>
            <person name="Sekowska A."/>
            <person name="Seror S.J."/>
            <person name="Serror P."/>
            <person name="Shin B.-S."/>
            <person name="Soldo B."/>
            <person name="Sorokin A."/>
            <person name="Tacconi E."/>
            <person name="Takagi T."/>
            <person name="Takahashi H."/>
            <person name="Takemaru K."/>
            <person name="Takeuchi M."/>
            <person name="Tamakoshi A."/>
            <person name="Tanaka T."/>
            <person name="Terpstra P."/>
            <person name="Tognoni A."/>
            <person name="Tosato V."/>
            <person name="Uchiyama S."/>
            <person name="Vandenbol M."/>
            <person name="Vannier F."/>
            <person name="Vassarotti A."/>
            <person name="Viari A."/>
            <person name="Wambutt R."/>
            <person name="Wedler E."/>
            <person name="Wedler H."/>
            <person name="Weitzenegger T."/>
            <person name="Winters P."/>
            <person name="Wipat A."/>
            <person name="Yamamoto H."/>
            <person name="Yamane K."/>
            <person name="Yasumoto K."/>
            <person name="Yata K."/>
            <person name="Yoshida K."/>
            <person name="Yoshikawa H.-F."/>
            <person name="Zumstein E."/>
            <person name="Yoshikawa H."/>
            <person name="Danchin A."/>
        </authorList>
    </citation>
    <scope>NUCLEOTIDE SEQUENCE [LARGE SCALE GENOMIC DNA]</scope>
    <source>
        <strain>168</strain>
    </source>
</reference>
<proteinExistence type="predicted"/>
<sequence>MMLSVFKKKSCSYDVTIFQTPRFGEKKGYRAVYRTELNGSDHQDVLKRAFSLFNVFDTVPSDYDARFMATGDVILIDEGRKGKTYYQLLPAGWRKINRLIVQTT</sequence>
<keyword id="KW-1185">Reference proteome</keyword>
<feature type="chain" id="PRO_0000049658" description="Uncharacterized protein YodL">
    <location>
        <begin position="1"/>
        <end position="104"/>
    </location>
</feature>
<feature type="sequence conflict" description="In Ref. 1; AAB81163." evidence="1" ref="1">
    <original>K</original>
    <variation>R</variation>
    <location>
        <position position="83"/>
    </location>
</feature>
<comment type="sequence caution" evidence="1">
    <conflict type="erroneous initiation">
        <sequence resource="EMBL-CDS" id="AAB72066"/>
    </conflict>
</comment>
<dbReference type="EMBL" id="AF015775">
    <property type="protein sequence ID" value="AAB72066.1"/>
    <property type="status" value="ALT_INIT"/>
    <property type="molecule type" value="Genomic_DNA"/>
</dbReference>
<dbReference type="EMBL" id="AF006665">
    <property type="protein sequence ID" value="AAB81163.1"/>
    <property type="molecule type" value="Genomic_DNA"/>
</dbReference>
<dbReference type="EMBL" id="AL009126">
    <property type="protein sequence ID" value="CAB13855.2"/>
    <property type="molecule type" value="Genomic_DNA"/>
</dbReference>
<dbReference type="PIR" id="G69903">
    <property type="entry name" value="G69903"/>
</dbReference>
<dbReference type="RefSeq" id="NP_389845.2">
    <property type="nucleotide sequence ID" value="NC_000964.3"/>
</dbReference>
<dbReference type="RefSeq" id="WP_004399431.1">
    <property type="nucleotide sequence ID" value="NZ_OZ025638.1"/>
</dbReference>
<dbReference type="FunCoup" id="O30472">
    <property type="interactions" value="10"/>
</dbReference>
<dbReference type="STRING" id="224308.BSU19640"/>
<dbReference type="TCDB" id="8.A.42.1.1">
    <property type="family name" value="the small hydrophilic yodl domain/protein (yodl) family"/>
</dbReference>
<dbReference type="PaxDb" id="224308-BSU19640"/>
<dbReference type="EnsemblBacteria" id="CAB13855">
    <property type="protein sequence ID" value="CAB13855"/>
    <property type="gene ID" value="BSU_19640"/>
</dbReference>
<dbReference type="GeneID" id="940030"/>
<dbReference type="KEGG" id="bsu:BSU19640"/>
<dbReference type="PATRIC" id="fig|224308.43.peg.2082"/>
<dbReference type="eggNOG" id="ENOG50343SB">
    <property type="taxonomic scope" value="Bacteria"/>
</dbReference>
<dbReference type="InParanoid" id="O30472"/>
<dbReference type="OrthoDB" id="2894333at2"/>
<dbReference type="BioCyc" id="BSUB:BSU19640-MONOMER"/>
<dbReference type="Proteomes" id="UP000001570">
    <property type="component" value="Chromosome"/>
</dbReference>
<dbReference type="InterPro" id="IPR025923">
    <property type="entry name" value="YodL-like"/>
</dbReference>
<dbReference type="Pfam" id="PF14191">
    <property type="entry name" value="YodL"/>
    <property type="match status" value="1"/>
</dbReference>
<gene>
    <name type="primary">yodL</name>
    <name type="synonym">yokX</name>
    <name type="ordered locus">BSU19640</name>
</gene>
<protein>
    <recommendedName>
        <fullName>Uncharacterized protein YodL</fullName>
    </recommendedName>
</protein>